<dbReference type="EC" id="1.1.1.86" evidence="1"/>
<dbReference type="EMBL" id="CP000046">
    <property type="protein sequence ID" value="AAW37008.1"/>
    <property type="molecule type" value="Genomic_DNA"/>
</dbReference>
<dbReference type="RefSeq" id="WP_000214557.1">
    <property type="nucleotide sequence ID" value="NZ_JBGOFO010000006.1"/>
</dbReference>
<dbReference type="SMR" id="Q5HEE5"/>
<dbReference type="KEGG" id="sac:SACOL2045"/>
<dbReference type="HOGENOM" id="CLU_033821_0_1_9"/>
<dbReference type="UniPathway" id="UPA00047">
    <property type="reaction ID" value="UER00056"/>
</dbReference>
<dbReference type="UniPathway" id="UPA00049">
    <property type="reaction ID" value="UER00060"/>
</dbReference>
<dbReference type="Proteomes" id="UP000000530">
    <property type="component" value="Chromosome"/>
</dbReference>
<dbReference type="GO" id="GO:0005829">
    <property type="term" value="C:cytosol"/>
    <property type="evidence" value="ECO:0007669"/>
    <property type="project" value="TreeGrafter"/>
</dbReference>
<dbReference type="GO" id="GO:0004455">
    <property type="term" value="F:ketol-acid reductoisomerase activity"/>
    <property type="evidence" value="ECO:0007669"/>
    <property type="project" value="UniProtKB-UniRule"/>
</dbReference>
<dbReference type="GO" id="GO:0000287">
    <property type="term" value="F:magnesium ion binding"/>
    <property type="evidence" value="ECO:0007669"/>
    <property type="project" value="UniProtKB-UniRule"/>
</dbReference>
<dbReference type="GO" id="GO:0050661">
    <property type="term" value="F:NADP binding"/>
    <property type="evidence" value="ECO:0007669"/>
    <property type="project" value="InterPro"/>
</dbReference>
<dbReference type="GO" id="GO:0009097">
    <property type="term" value="P:isoleucine biosynthetic process"/>
    <property type="evidence" value="ECO:0007669"/>
    <property type="project" value="UniProtKB-UniRule"/>
</dbReference>
<dbReference type="GO" id="GO:0009099">
    <property type="term" value="P:L-valine biosynthetic process"/>
    <property type="evidence" value="ECO:0007669"/>
    <property type="project" value="UniProtKB-UniRule"/>
</dbReference>
<dbReference type="FunFam" id="3.40.50.720:FF:000023">
    <property type="entry name" value="Ketol-acid reductoisomerase (NADP(+))"/>
    <property type="match status" value="1"/>
</dbReference>
<dbReference type="Gene3D" id="6.10.240.10">
    <property type="match status" value="1"/>
</dbReference>
<dbReference type="Gene3D" id="3.40.50.720">
    <property type="entry name" value="NAD(P)-binding Rossmann-like Domain"/>
    <property type="match status" value="1"/>
</dbReference>
<dbReference type="HAMAP" id="MF_00435">
    <property type="entry name" value="IlvC"/>
    <property type="match status" value="1"/>
</dbReference>
<dbReference type="InterPro" id="IPR008927">
    <property type="entry name" value="6-PGluconate_DH-like_C_sf"/>
</dbReference>
<dbReference type="InterPro" id="IPR013023">
    <property type="entry name" value="KARI"/>
</dbReference>
<dbReference type="InterPro" id="IPR000506">
    <property type="entry name" value="KARI_C"/>
</dbReference>
<dbReference type="InterPro" id="IPR013116">
    <property type="entry name" value="KARI_N"/>
</dbReference>
<dbReference type="InterPro" id="IPR014359">
    <property type="entry name" value="KARI_prok"/>
</dbReference>
<dbReference type="InterPro" id="IPR036291">
    <property type="entry name" value="NAD(P)-bd_dom_sf"/>
</dbReference>
<dbReference type="NCBIfam" id="TIGR00465">
    <property type="entry name" value="ilvC"/>
    <property type="match status" value="1"/>
</dbReference>
<dbReference type="NCBIfam" id="NF004017">
    <property type="entry name" value="PRK05479.1"/>
    <property type="match status" value="1"/>
</dbReference>
<dbReference type="NCBIfam" id="NF009940">
    <property type="entry name" value="PRK13403.1"/>
    <property type="match status" value="1"/>
</dbReference>
<dbReference type="PANTHER" id="PTHR21371">
    <property type="entry name" value="KETOL-ACID REDUCTOISOMERASE, MITOCHONDRIAL"/>
    <property type="match status" value="1"/>
</dbReference>
<dbReference type="PANTHER" id="PTHR21371:SF1">
    <property type="entry name" value="KETOL-ACID REDUCTOISOMERASE, MITOCHONDRIAL"/>
    <property type="match status" value="1"/>
</dbReference>
<dbReference type="Pfam" id="PF01450">
    <property type="entry name" value="KARI_C"/>
    <property type="match status" value="1"/>
</dbReference>
<dbReference type="Pfam" id="PF07991">
    <property type="entry name" value="KARI_N"/>
    <property type="match status" value="1"/>
</dbReference>
<dbReference type="PIRSF" id="PIRSF000116">
    <property type="entry name" value="IlvC_gammaproteo"/>
    <property type="match status" value="1"/>
</dbReference>
<dbReference type="SUPFAM" id="SSF48179">
    <property type="entry name" value="6-phosphogluconate dehydrogenase C-terminal domain-like"/>
    <property type="match status" value="1"/>
</dbReference>
<dbReference type="SUPFAM" id="SSF51735">
    <property type="entry name" value="NAD(P)-binding Rossmann-fold domains"/>
    <property type="match status" value="1"/>
</dbReference>
<dbReference type="PROSITE" id="PS51851">
    <property type="entry name" value="KARI_C"/>
    <property type="match status" value="1"/>
</dbReference>
<dbReference type="PROSITE" id="PS51850">
    <property type="entry name" value="KARI_N"/>
    <property type="match status" value="1"/>
</dbReference>
<evidence type="ECO:0000255" key="1">
    <source>
        <dbReference type="HAMAP-Rule" id="MF_00435"/>
    </source>
</evidence>
<evidence type="ECO:0000255" key="2">
    <source>
        <dbReference type="PROSITE-ProRule" id="PRU01197"/>
    </source>
</evidence>
<evidence type="ECO:0000255" key="3">
    <source>
        <dbReference type="PROSITE-ProRule" id="PRU01198"/>
    </source>
</evidence>
<sequence length="334" mass="36956">MTTVYYDQDVKTDALQGKKIAVVGYGSQGHAHAQNLKDNGYDVVIGIRPGRSFDKAKEDGFDVFPVAEAVKQADVIMVLLPDEIQGDVYKNEIEPNLEKHNALAFAHGFNIHFGVIQPPADVDVFLVAPKGPGHLVRRTFVEGSAVPSLFGIQQGASGQARNIALSYAKGIGATRAGVIETTFKEETETDLFGEQAVLCGGVSKLIQSGFETLVEAGYQPELAYFEVLHEMKLIVDLMYEGGMENVRYSISNTAEFGDYVSGPRVITPDVKENMKAVLTDIQNGNFSNRFIEDNKNGFKEFYKLREEQHGHQIEKVGRELREMMPFIKSKSIEK</sequence>
<proteinExistence type="inferred from homology"/>
<keyword id="KW-0028">Amino-acid biosynthesis</keyword>
<keyword id="KW-0100">Branched-chain amino acid biosynthesis</keyword>
<keyword id="KW-0460">Magnesium</keyword>
<keyword id="KW-0479">Metal-binding</keyword>
<keyword id="KW-0521">NADP</keyword>
<keyword id="KW-0560">Oxidoreductase</keyword>
<comment type="function">
    <text evidence="1">Involved in the biosynthesis of branched-chain amino acids (BCAA). Catalyzes an alkyl-migration followed by a ketol-acid reduction of (S)-2-acetolactate (S2AL) to yield (R)-2,3-dihydroxy-isovalerate. In the isomerase reaction, S2AL is rearranged via a Mg-dependent methyl migration to produce 3-hydroxy-3-methyl-2-ketobutyrate (HMKB). In the reductase reaction, this 2-ketoacid undergoes a metal-dependent reduction by NADPH to yield (R)-2,3-dihydroxy-isovalerate.</text>
</comment>
<comment type="catalytic activity">
    <reaction evidence="1">
        <text>(2R)-2,3-dihydroxy-3-methylbutanoate + NADP(+) = (2S)-2-acetolactate + NADPH + H(+)</text>
        <dbReference type="Rhea" id="RHEA:22068"/>
        <dbReference type="ChEBI" id="CHEBI:15378"/>
        <dbReference type="ChEBI" id="CHEBI:49072"/>
        <dbReference type="ChEBI" id="CHEBI:57783"/>
        <dbReference type="ChEBI" id="CHEBI:58349"/>
        <dbReference type="ChEBI" id="CHEBI:58476"/>
        <dbReference type="EC" id="1.1.1.86"/>
    </reaction>
</comment>
<comment type="catalytic activity">
    <reaction evidence="1">
        <text>(2R,3R)-2,3-dihydroxy-3-methylpentanoate + NADP(+) = (S)-2-ethyl-2-hydroxy-3-oxobutanoate + NADPH + H(+)</text>
        <dbReference type="Rhea" id="RHEA:13493"/>
        <dbReference type="ChEBI" id="CHEBI:15378"/>
        <dbReference type="ChEBI" id="CHEBI:49256"/>
        <dbReference type="ChEBI" id="CHEBI:49258"/>
        <dbReference type="ChEBI" id="CHEBI:57783"/>
        <dbReference type="ChEBI" id="CHEBI:58349"/>
        <dbReference type="EC" id="1.1.1.86"/>
    </reaction>
</comment>
<comment type="cofactor">
    <cofactor evidence="1">
        <name>Mg(2+)</name>
        <dbReference type="ChEBI" id="CHEBI:18420"/>
    </cofactor>
    <text evidence="1">Binds 2 magnesium ions per subunit.</text>
</comment>
<comment type="pathway">
    <text evidence="1">Amino-acid biosynthesis; L-isoleucine biosynthesis; L-isoleucine from 2-oxobutanoate: step 2/4.</text>
</comment>
<comment type="pathway">
    <text evidence="1">Amino-acid biosynthesis; L-valine biosynthesis; L-valine from pyruvate: step 2/4.</text>
</comment>
<comment type="similarity">
    <text evidence="1">Belongs to the ketol-acid reductoisomerase family.</text>
</comment>
<feature type="chain" id="PRO_0000151355" description="Ketol-acid reductoisomerase (NADP(+))">
    <location>
        <begin position="1"/>
        <end position="334"/>
    </location>
</feature>
<feature type="domain" description="KARI N-terminal Rossmann" evidence="2">
    <location>
        <begin position="1"/>
        <end position="181"/>
    </location>
</feature>
<feature type="domain" description="KARI C-terminal knotted" evidence="3">
    <location>
        <begin position="182"/>
        <end position="327"/>
    </location>
</feature>
<feature type="active site" evidence="1">
    <location>
        <position position="107"/>
    </location>
</feature>
<feature type="binding site" evidence="1">
    <location>
        <begin position="25"/>
        <end position="28"/>
    </location>
    <ligand>
        <name>NADP(+)</name>
        <dbReference type="ChEBI" id="CHEBI:58349"/>
    </ligand>
</feature>
<feature type="binding site" evidence="1">
    <location>
        <position position="48"/>
    </location>
    <ligand>
        <name>NADP(+)</name>
        <dbReference type="ChEBI" id="CHEBI:58349"/>
    </ligand>
</feature>
<feature type="binding site" evidence="1">
    <location>
        <position position="52"/>
    </location>
    <ligand>
        <name>NADP(+)</name>
        <dbReference type="ChEBI" id="CHEBI:58349"/>
    </ligand>
</feature>
<feature type="binding site" evidence="1">
    <location>
        <begin position="82"/>
        <end position="85"/>
    </location>
    <ligand>
        <name>NADP(+)</name>
        <dbReference type="ChEBI" id="CHEBI:58349"/>
    </ligand>
</feature>
<feature type="binding site" evidence="1">
    <location>
        <position position="133"/>
    </location>
    <ligand>
        <name>NADP(+)</name>
        <dbReference type="ChEBI" id="CHEBI:58349"/>
    </ligand>
</feature>
<feature type="binding site" evidence="1">
    <location>
        <position position="190"/>
    </location>
    <ligand>
        <name>Mg(2+)</name>
        <dbReference type="ChEBI" id="CHEBI:18420"/>
        <label>1</label>
    </ligand>
</feature>
<feature type="binding site" evidence="1">
    <location>
        <position position="190"/>
    </location>
    <ligand>
        <name>Mg(2+)</name>
        <dbReference type="ChEBI" id="CHEBI:18420"/>
        <label>2</label>
    </ligand>
</feature>
<feature type="binding site" evidence="1">
    <location>
        <position position="194"/>
    </location>
    <ligand>
        <name>Mg(2+)</name>
        <dbReference type="ChEBI" id="CHEBI:18420"/>
        <label>1</label>
    </ligand>
</feature>
<feature type="binding site" evidence="1">
    <location>
        <position position="226"/>
    </location>
    <ligand>
        <name>Mg(2+)</name>
        <dbReference type="ChEBI" id="CHEBI:18420"/>
        <label>2</label>
    </ligand>
</feature>
<feature type="binding site" evidence="1">
    <location>
        <position position="230"/>
    </location>
    <ligand>
        <name>Mg(2+)</name>
        <dbReference type="ChEBI" id="CHEBI:18420"/>
        <label>2</label>
    </ligand>
</feature>
<feature type="binding site" evidence="1">
    <location>
        <position position="251"/>
    </location>
    <ligand>
        <name>substrate</name>
    </ligand>
</feature>
<protein>
    <recommendedName>
        <fullName evidence="1">Ketol-acid reductoisomerase (NADP(+))</fullName>
        <shortName evidence="1">KARI</shortName>
        <ecNumber evidence="1">1.1.1.86</ecNumber>
    </recommendedName>
    <alternativeName>
        <fullName evidence="1">Acetohydroxy-acid isomeroreductase</fullName>
        <shortName evidence="1">AHIR</shortName>
    </alternativeName>
    <alternativeName>
        <fullName evidence="1">Alpha-keto-beta-hydroxylacyl reductoisomerase</fullName>
    </alternativeName>
    <alternativeName>
        <fullName evidence="1">Ketol-acid reductoisomerase type 1</fullName>
    </alternativeName>
    <alternativeName>
        <fullName evidence="1">Ketol-acid reductoisomerase type I</fullName>
    </alternativeName>
</protein>
<reference key="1">
    <citation type="journal article" date="2005" name="J. Bacteriol.">
        <title>Insights on evolution of virulence and resistance from the complete genome analysis of an early methicillin-resistant Staphylococcus aureus strain and a biofilm-producing methicillin-resistant Staphylococcus epidermidis strain.</title>
        <authorList>
            <person name="Gill S.R."/>
            <person name="Fouts D.E."/>
            <person name="Archer G.L."/>
            <person name="Mongodin E.F."/>
            <person name="DeBoy R.T."/>
            <person name="Ravel J."/>
            <person name="Paulsen I.T."/>
            <person name="Kolonay J.F."/>
            <person name="Brinkac L.M."/>
            <person name="Beanan M.J."/>
            <person name="Dodson R.J."/>
            <person name="Daugherty S.C."/>
            <person name="Madupu R."/>
            <person name="Angiuoli S.V."/>
            <person name="Durkin A.S."/>
            <person name="Haft D.H."/>
            <person name="Vamathevan J.J."/>
            <person name="Khouri H."/>
            <person name="Utterback T.R."/>
            <person name="Lee C."/>
            <person name="Dimitrov G."/>
            <person name="Jiang L."/>
            <person name="Qin H."/>
            <person name="Weidman J."/>
            <person name="Tran K."/>
            <person name="Kang K.H."/>
            <person name="Hance I.R."/>
            <person name="Nelson K.E."/>
            <person name="Fraser C.M."/>
        </authorList>
    </citation>
    <scope>NUCLEOTIDE SEQUENCE [LARGE SCALE GENOMIC DNA]</scope>
    <source>
        <strain>COL</strain>
    </source>
</reference>
<organism>
    <name type="scientific">Staphylococcus aureus (strain COL)</name>
    <dbReference type="NCBI Taxonomy" id="93062"/>
    <lineage>
        <taxon>Bacteria</taxon>
        <taxon>Bacillati</taxon>
        <taxon>Bacillota</taxon>
        <taxon>Bacilli</taxon>
        <taxon>Bacillales</taxon>
        <taxon>Staphylococcaceae</taxon>
        <taxon>Staphylococcus</taxon>
    </lineage>
</organism>
<gene>
    <name evidence="1" type="primary">ilvC</name>
    <name type="ordered locus">SACOL2045</name>
</gene>
<accession>Q5HEE5</accession>
<name>ILVC_STAAC</name>